<gene>
    <name evidence="1" type="primary">mgsA</name>
    <name type="ordered locus">BceJ2315_23450</name>
    <name type="ORF">BCAL2385</name>
</gene>
<dbReference type="EC" id="4.2.3.3" evidence="1"/>
<dbReference type="EMBL" id="AM747720">
    <property type="protein sequence ID" value="CAR52686.1"/>
    <property type="molecule type" value="Genomic_DNA"/>
</dbReference>
<dbReference type="RefSeq" id="WP_006478230.1">
    <property type="nucleotide sequence ID" value="NC_011000.1"/>
</dbReference>
<dbReference type="SMR" id="B4E5R3"/>
<dbReference type="KEGG" id="bcj:BCAL2385"/>
<dbReference type="eggNOG" id="COG1803">
    <property type="taxonomic scope" value="Bacteria"/>
</dbReference>
<dbReference type="HOGENOM" id="CLU_120420_1_0_4"/>
<dbReference type="BioCyc" id="BCEN216591:G1G1V-2632-MONOMER"/>
<dbReference type="Proteomes" id="UP000001035">
    <property type="component" value="Chromosome 1"/>
</dbReference>
<dbReference type="GO" id="GO:0005829">
    <property type="term" value="C:cytosol"/>
    <property type="evidence" value="ECO:0007669"/>
    <property type="project" value="TreeGrafter"/>
</dbReference>
<dbReference type="GO" id="GO:0008929">
    <property type="term" value="F:methylglyoxal synthase activity"/>
    <property type="evidence" value="ECO:0007669"/>
    <property type="project" value="UniProtKB-UniRule"/>
</dbReference>
<dbReference type="GO" id="GO:0019242">
    <property type="term" value="P:methylglyoxal biosynthetic process"/>
    <property type="evidence" value="ECO:0007669"/>
    <property type="project" value="UniProtKB-UniRule"/>
</dbReference>
<dbReference type="CDD" id="cd01422">
    <property type="entry name" value="MGS"/>
    <property type="match status" value="1"/>
</dbReference>
<dbReference type="Gene3D" id="3.40.50.1380">
    <property type="entry name" value="Methylglyoxal synthase-like domain"/>
    <property type="match status" value="1"/>
</dbReference>
<dbReference type="HAMAP" id="MF_00549">
    <property type="entry name" value="Methylglyoxal_synth"/>
    <property type="match status" value="1"/>
</dbReference>
<dbReference type="InterPro" id="IPR004363">
    <property type="entry name" value="Methylgl_synth"/>
</dbReference>
<dbReference type="InterPro" id="IPR018148">
    <property type="entry name" value="Methylglyoxal_synth_AS"/>
</dbReference>
<dbReference type="InterPro" id="IPR011607">
    <property type="entry name" value="MGS-like_dom"/>
</dbReference>
<dbReference type="InterPro" id="IPR036914">
    <property type="entry name" value="MGS-like_dom_sf"/>
</dbReference>
<dbReference type="NCBIfam" id="TIGR00160">
    <property type="entry name" value="MGSA"/>
    <property type="match status" value="1"/>
</dbReference>
<dbReference type="NCBIfam" id="NF003559">
    <property type="entry name" value="PRK05234.1"/>
    <property type="match status" value="1"/>
</dbReference>
<dbReference type="PANTHER" id="PTHR30492">
    <property type="entry name" value="METHYLGLYOXAL SYNTHASE"/>
    <property type="match status" value="1"/>
</dbReference>
<dbReference type="PANTHER" id="PTHR30492:SF0">
    <property type="entry name" value="METHYLGLYOXAL SYNTHASE"/>
    <property type="match status" value="1"/>
</dbReference>
<dbReference type="Pfam" id="PF02142">
    <property type="entry name" value="MGS"/>
    <property type="match status" value="1"/>
</dbReference>
<dbReference type="PIRSF" id="PIRSF006614">
    <property type="entry name" value="Methylglyox_syn"/>
    <property type="match status" value="1"/>
</dbReference>
<dbReference type="SMART" id="SM00851">
    <property type="entry name" value="MGS"/>
    <property type="match status" value="1"/>
</dbReference>
<dbReference type="SUPFAM" id="SSF52335">
    <property type="entry name" value="Methylglyoxal synthase-like"/>
    <property type="match status" value="1"/>
</dbReference>
<dbReference type="PROSITE" id="PS01335">
    <property type="entry name" value="METHYLGLYOXAL_SYNTH"/>
    <property type="match status" value="1"/>
</dbReference>
<dbReference type="PROSITE" id="PS51855">
    <property type="entry name" value="MGS"/>
    <property type="match status" value="1"/>
</dbReference>
<name>MGSA_BURCJ</name>
<proteinExistence type="inferred from homology"/>
<evidence type="ECO:0000255" key="1">
    <source>
        <dbReference type="HAMAP-Rule" id="MF_00549"/>
    </source>
</evidence>
<sequence>MSKPRIALIAHDAKKDEIVALAGQYRETLAQCRLVATGTTGGRIAAAHGLEVERKLSGPLGGDLQIGAELADGRVDIVVFLRDPMTAQPHDPDITALVRACDVHDVPVATNVATARMLLDDLARNMQDVC</sequence>
<keyword id="KW-0456">Lyase</keyword>
<comment type="function">
    <text evidence="1">Catalyzes the formation of methylglyoxal from dihydroxyacetone phosphate.</text>
</comment>
<comment type="catalytic activity">
    <reaction evidence="1">
        <text>dihydroxyacetone phosphate = methylglyoxal + phosphate</text>
        <dbReference type="Rhea" id="RHEA:17937"/>
        <dbReference type="ChEBI" id="CHEBI:17158"/>
        <dbReference type="ChEBI" id="CHEBI:43474"/>
        <dbReference type="ChEBI" id="CHEBI:57642"/>
        <dbReference type="EC" id="4.2.3.3"/>
    </reaction>
</comment>
<comment type="similarity">
    <text evidence="1">Belongs to the methylglyoxal synthase family.</text>
</comment>
<feature type="chain" id="PRO_1000128982" description="Methylglyoxal synthase">
    <location>
        <begin position="1"/>
        <end position="130"/>
    </location>
</feature>
<feature type="domain" description="MGS-like" evidence="1">
    <location>
        <begin position="1"/>
        <end position="130"/>
    </location>
</feature>
<feature type="active site" description="Proton donor/acceptor" evidence="1">
    <location>
        <position position="63"/>
    </location>
</feature>
<feature type="binding site" evidence="1">
    <location>
        <position position="11"/>
    </location>
    <ligand>
        <name>substrate</name>
    </ligand>
</feature>
<feature type="binding site" evidence="1">
    <location>
        <position position="15"/>
    </location>
    <ligand>
        <name>substrate</name>
    </ligand>
</feature>
<feature type="binding site" evidence="1">
    <location>
        <begin position="37"/>
        <end position="40"/>
    </location>
    <ligand>
        <name>substrate</name>
    </ligand>
</feature>
<feature type="binding site" evidence="1">
    <location>
        <begin position="57"/>
        <end position="58"/>
    </location>
    <ligand>
        <name>substrate</name>
    </ligand>
</feature>
<feature type="binding site" evidence="1">
    <location>
        <position position="90"/>
    </location>
    <ligand>
        <name>substrate</name>
    </ligand>
</feature>
<accession>B4E5R3</accession>
<reference key="1">
    <citation type="journal article" date="2009" name="J. Bacteriol.">
        <title>The genome of Burkholderia cenocepacia J2315, an epidemic pathogen of cystic fibrosis patients.</title>
        <authorList>
            <person name="Holden M.T."/>
            <person name="Seth-Smith H.M."/>
            <person name="Crossman L.C."/>
            <person name="Sebaihia M."/>
            <person name="Bentley S.D."/>
            <person name="Cerdeno-Tarraga A.M."/>
            <person name="Thomson N.R."/>
            <person name="Bason N."/>
            <person name="Quail M.A."/>
            <person name="Sharp S."/>
            <person name="Cherevach I."/>
            <person name="Churcher C."/>
            <person name="Goodhead I."/>
            <person name="Hauser H."/>
            <person name="Holroyd N."/>
            <person name="Mungall K."/>
            <person name="Scott P."/>
            <person name="Walker D."/>
            <person name="White B."/>
            <person name="Rose H."/>
            <person name="Iversen P."/>
            <person name="Mil-Homens D."/>
            <person name="Rocha E.P."/>
            <person name="Fialho A.M."/>
            <person name="Baldwin A."/>
            <person name="Dowson C."/>
            <person name="Barrell B.G."/>
            <person name="Govan J.R."/>
            <person name="Vandamme P."/>
            <person name="Hart C.A."/>
            <person name="Mahenthiralingam E."/>
            <person name="Parkhill J."/>
        </authorList>
    </citation>
    <scope>NUCLEOTIDE SEQUENCE [LARGE SCALE GENOMIC DNA]</scope>
    <source>
        <strain>ATCC BAA-245 / DSM 16553 / LMG 16656 / NCTC 13227 / J2315 / CF5610</strain>
    </source>
</reference>
<organism>
    <name type="scientific">Burkholderia cenocepacia (strain ATCC BAA-245 / DSM 16553 / LMG 16656 / NCTC 13227 / J2315 / CF5610)</name>
    <name type="common">Burkholderia cepacia (strain J2315)</name>
    <dbReference type="NCBI Taxonomy" id="216591"/>
    <lineage>
        <taxon>Bacteria</taxon>
        <taxon>Pseudomonadati</taxon>
        <taxon>Pseudomonadota</taxon>
        <taxon>Betaproteobacteria</taxon>
        <taxon>Burkholderiales</taxon>
        <taxon>Burkholderiaceae</taxon>
        <taxon>Burkholderia</taxon>
        <taxon>Burkholderia cepacia complex</taxon>
    </lineage>
</organism>
<protein>
    <recommendedName>
        <fullName evidence="1">Methylglyoxal synthase</fullName>
        <shortName evidence="1">MGS</shortName>
        <ecNumber evidence="1">4.2.3.3</ecNumber>
    </recommendedName>
</protein>